<sequence length="299" mass="35510">MCDPIREDGSNKRGAVSKEKRPYIHREWSWADIIRALTVINVHFLCLLAPFNYKWEALRFGFVLYALTSLSITFSYHRNLAHRSFKLPKWLEYPLAYFAVFALQGDPLDWVSIHRFHHQFTDSDRDPHSPIEGFWFSHVWWICDTRYIKYKCGGRNNVMDLKQQWFYWFLRMTIGFHVLMFWTVLYLYGGLPYLTCGGGVGGVIGYHVTWLVNSACHIWGSRSWKTKDTSRNVWWLSLFTMGESWHNNHHAFESSARQGLEWWQIDITWYLIRLFEVLGLATDVKLPSEIQKQKLALTR</sequence>
<accession>Q9LMI3</accession>
<dbReference type="EC" id="1.14.19.-"/>
<dbReference type="EMBL" id="AC068143">
    <property type="protein sequence ID" value="AAF82164.1"/>
    <property type="molecule type" value="Genomic_DNA"/>
</dbReference>
<dbReference type="EMBL" id="CP002684">
    <property type="protein sequence ID" value="AEE27978.1"/>
    <property type="molecule type" value="Genomic_DNA"/>
</dbReference>
<dbReference type="EMBL" id="AF332427">
    <property type="protein sequence ID" value="AAG48790.1"/>
    <property type="molecule type" value="mRNA"/>
</dbReference>
<dbReference type="PIR" id="D86199">
    <property type="entry name" value="D86199"/>
</dbReference>
<dbReference type="RefSeq" id="NP_172125.1">
    <property type="nucleotide sequence ID" value="NM_100517.6"/>
</dbReference>
<dbReference type="SMR" id="Q9LMI3"/>
<dbReference type="FunCoup" id="Q9LMI3">
    <property type="interactions" value="332"/>
</dbReference>
<dbReference type="STRING" id="3702.Q9LMI3"/>
<dbReference type="PaxDb" id="3702-AT1G06360.1"/>
<dbReference type="ProteomicsDB" id="244648"/>
<dbReference type="EnsemblPlants" id="AT1G06360.1">
    <property type="protein sequence ID" value="AT1G06360.1"/>
    <property type="gene ID" value="AT1G06360"/>
</dbReference>
<dbReference type="GeneID" id="837147"/>
<dbReference type="Gramene" id="AT1G06360.1">
    <property type="protein sequence ID" value="AT1G06360.1"/>
    <property type="gene ID" value="AT1G06360"/>
</dbReference>
<dbReference type="KEGG" id="ath:AT1G06360"/>
<dbReference type="Araport" id="AT1G06360"/>
<dbReference type="TAIR" id="AT1G06360"/>
<dbReference type="eggNOG" id="KOG1600">
    <property type="taxonomic scope" value="Eukaryota"/>
</dbReference>
<dbReference type="HOGENOM" id="CLU_027359_1_0_1"/>
<dbReference type="InParanoid" id="Q9LMI3"/>
<dbReference type="PhylomeDB" id="Q9LMI3"/>
<dbReference type="UniPathway" id="UPA00658"/>
<dbReference type="PRO" id="PR:Q9LMI3"/>
<dbReference type="Proteomes" id="UP000006548">
    <property type="component" value="Chromosome 1"/>
</dbReference>
<dbReference type="ExpressionAtlas" id="Q9LMI3">
    <property type="expression patterns" value="baseline and differential"/>
</dbReference>
<dbReference type="GO" id="GO:0005783">
    <property type="term" value="C:endoplasmic reticulum"/>
    <property type="evidence" value="ECO:0000314"/>
    <property type="project" value="TAIR"/>
</dbReference>
<dbReference type="GO" id="GO:0005789">
    <property type="term" value="C:endoplasmic reticulum membrane"/>
    <property type="evidence" value="ECO:0000314"/>
    <property type="project" value="TAIR"/>
</dbReference>
<dbReference type="GO" id="GO:0016215">
    <property type="term" value="F:acyl-CoA desaturase activity"/>
    <property type="evidence" value="ECO:0000314"/>
    <property type="project" value="TAIR"/>
</dbReference>
<dbReference type="GO" id="GO:0006636">
    <property type="term" value="P:unsaturated fatty acid biosynthetic process"/>
    <property type="evidence" value="ECO:0000315"/>
    <property type="project" value="TAIR"/>
</dbReference>
<dbReference type="GO" id="GO:0010025">
    <property type="term" value="P:wax biosynthetic process"/>
    <property type="evidence" value="ECO:0000315"/>
    <property type="project" value="TAIR"/>
</dbReference>
<dbReference type="CDD" id="cd03505">
    <property type="entry name" value="Delta9-FADS-like"/>
    <property type="match status" value="1"/>
</dbReference>
<dbReference type="InterPro" id="IPR015876">
    <property type="entry name" value="Acyl-CoA_DS"/>
</dbReference>
<dbReference type="InterPro" id="IPR005804">
    <property type="entry name" value="FA_desaturase_dom"/>
</dbReference>
<dbReference type="PANTHER" id="PTHR11351">
    <property type="entry name" value="ACYL-COA DESATURASE"/>
    <property type="match status" value="1"/>
</dbReference>
<dbReference type="PANTHER" id="PTHR11351:SF66">
    <property type="entry name" value="DELTA-9 DESATURASE-LIKE 4 PROTEIN-RELATED"/>
    <property type="match status" value="1"/>
</dbReference>
<dbReference type="Pfam" id="PF00487">
    <property type="entry name" value="FA_desaturase"/>
    <property type="match status" value="1"/>
</dbReference>
<dbReference type="PRINTS" id="PR00075">
    <property type="entry name" value="FACDDSATRASE"/>
</dbReference>
<protein>
    <recommendedName>
        <fullName>Delta-9 desaturase-like 5 protein</fullName>
        <ecNumber>1.14.19.-</ecNumber>
    </recommendedName>
</protein>
<name>ADSL5_ARATH</name>
<proteinExistence type="evidence at transcript level"/>
<comment type="cofactor">
    <cofactor evidence="1">
        <name>Fe cation</name>
        <dbReference type="ChEBI" id="CHEBI:24875"/>
    </cofactor>
</comment>
<comment type="pathway">
    <text>Lipid metabolism; polyunsaturated fatty acid biosynthesis.</text>
</comment>
<comment type="subcellular location">
    <subcellularLocation>
        <location evidence="1">Endoplasmic reticulum membrane</location>
        <topology evidence="1">Multi-pass membrane protein</topology>
    </subcellularLocation>
</comment>
<comment type="domain">
    <text evidence="1">The histidine box domains may contain the active site and/or be involved in metal ion binding.</text>
</comment>
<comment type="similarity">
    <text evidence="3">Belongs to the fatty acid desaturase type 1 family.</text>
</comment>
<evidence type="ECO:0000250" key="1"/>
<evidence type="ECO:0000255" key="2"/>
<evidence type="ECO:0000305" key="3"/>
<feature type="chain" id="PRO_0000185431" description="Delta-9 desaturase-like 5 protein">
    <location>
        <begin position="1"/>
        <end position="299"/>
    </location>
</feature>
<feature type="transmembrane region" description="Helical" evidence="2">
    <location>
        <begin position="31"/>
        <end position="51"/>
    </location>
</feature>
<feature type="transmembrane region" description="Helical" evidence="2">
    <location>
        <begin position="55"/>
        <end position="75"/>
    </location>
</feature>
<feature type="transmembrane region" description="Helical" evidence="2">
    <location>
        <begin position="174"/>
        <end position="194"/>
    </location>
</feature>
<feature type="transmembrane region" description="Helical" evidence="2">
    <location>
        <begin position="199"/>
        <end position="219"/>
    </location>
</feature>
<feature type="short sequence motif" description="Histidine box-1">
    <location>
        <begin position="77"/>
        <end position="82"/>
    </location>
</feature>
<feature type="short sequence motif" description="Histidine box-2">
    <location>
        <begin position="114"/>
        <end position="118"/>
    </location>
</feature>
<feature type="short sequence motif" description="Histidine box-3">
    <location>
        <begin position="246"/>
        <end position="250"/>
    </location>
</feature>
<gene>
    <name type="ordered locus">At1g06360</name>
    <name type="ORF">T2D23.6</name>
    <name type="ORF">T2D23_4</name>
</gene>
<organism>
    <name type="scientific">Arabidopsis thaliana</name>
    <name type="common">Mouse-ear cress</name>
    <dbReference type="NCBI Taxonomy" id="3702"/>
    <lineage>
        <taxon>Eukaryota</taxon>
        <taxon>Viridiplantae</taxon>
        <taxon>Streptophyta</taxon>
        <taxon>Embryophyta</taxon>
        <taxon>Tracheophyta</taxon>
        <taxon>Spermatophyta</taxon>
        <taxon>Magnoliopsida</taxon>
        <taxon>eudicotyledons</taxon>
        <taxon>Gunneridae</taxon>
        <taxon>Pentapetalae</taxon>
        <taxon>rosids</taxon>
        <taxon>malvids</taxon>
        <taxon>Brassicales</taxon>
        <taxon>Brassicaceae</taxon>
        <taxon>Camelineae</taxon>
        <taxon>Arabidopsis</taxon>
    </lineage>
</organism>
<reference key="1">
    <citation type="journal article" date="2000" name="Nature">
        <title>Sequence and analysis of chromosome 1 of the plant Arabidopsis thaliana.</title>
        <authorList>
            <person name="Theologis A."/>
            <person name="Ecker J.R."/>
            <person name="Palm C.J."/>
            <person name="Federspiel N.A."/>
            <person name="Kaul S."/>
            <person name="White O."/>
            <person name="Alonso J."/>
            <person name="Altafi H."/>
            <person name="Araujo R."/>
            <person name="Bowman C.L."/>
            <person name="Brooks S.Y."/>
            <person name="Buehler E."/>
            <person name="Chan A."/>
            <person name="Chao Q."/>
            <person name="Chen H."/>
            <person name="Cheuk R.F."/>
            <person name="Chin C.W."/>
            <person name="Chung M.K."/>
            <person name="Conn L."/>
            <person name="Conway A.B."/>
            <person name="Conway A.R."/>
            <person name="Creasy T.H."/>
            <person name="Dewar K."/>
            <person name="Dunn P."/>
            <person name="Etgu P."/>
            <person name="Feldblyum T.V."/>
            <person name="Feng J.-D."/>
            <person name="Fong B."/>
            <person name="Fujii C.Y."/>
            <person name="Gill J.E."/>
            <person name="Goldsmith A.D."/>
            <person name="Haas B."/>
            <person name="Hansen N.F."/>
            <person name="Hughes B."/>
            <person name="Huizar L."/>
            <person name="Hunter J.L."/>
            <person name="Jenkins J."/>
            <person name="Johnson-Hopson C."/>
            <person name="Khan S."/>
            <person name="Khaykin E."/>
            <person name="Kim C.J."/>
            <person name="Koo H.L."/>
            <person name="Kremenetskaia I."/>
            <person name="Kurtz D.B."/>
            <person name="Kwan A."/>
            <person name="Lam B."/>
            <person name="Langin-Hooper S."/>
            <person name="Lee A."/>
            <person name="Lee J.M."/>
            <person name="Lenz C.A."/>
            <person name="Li J.H."/>
            <person name="Li Y.-P."/>
            <person name="Lin X."/>
            <person name="Liu S.X."/>
            <person name="Liu Z.A."/>
            <person name="Luros J.S."/>
            <person name="Maiti R."/>
            <person name="Marziali A."/>
            <person name="Militscher J."/>
            <person name="Miranda M."/>
            <person name="Nguyen M."/>
            <person name="Nierman W.C."/>
            <person name="Osborne B.I."/>
            <person name="Pai G."/>
            <person name="Peterson J."/>
            <person name="Pham P.K."/>
            <person name="Rizzo M."/>
            <person name="Rooney T."/>
            <person name="Rowley D."/>
            <person name="Sakano H."/>
            <person name="Salzberg S.L."/>
            <person name="Schwartz J.R."/>
            <person name="Shinn P."/>
            <person name="Southwick A.M."/>
            <person name="Sun H."/>
            <person name="Tallon L.J."/>
            <person name="Tambunga G."/>
            <person name="Toriumi M.J."/>
            <person name="Town C.D."/>
            <person name="Utterback T."/>
            <person name="Van Aken S."/>
            <person name="Vaysberg M."/>
            <person name="Vysotskaia V.S."/>
            <person name="Walker M."/>
            <person name="Wu D."/>
            <person name="Yu G."/>
            <person name="Fraser C.M."/>
            <person name="Venter J.C."/>
            <person name="Davis R.W."/>
        </authorList>
    </citation>
    <scope>NUCLEOTIDE SEQUENCE [LARGE SCALE GENOMIC DNA]</scope>
    <source>
        <strain>cv. Columbia</strain>
    </source>
</reference>
<reference key="2">
    <citation type="journal article" date="2017" name="Plant J.">
        <title>Araport11: a complete reannotation of the Arabidopsis thaliana reference genome.</title>
        <authorList>
            <person name="Cheng C.Y."/>
            <person name="Krishnakumar V."/>
            <person name="Chan A.P."/>
            <person name="Thibaud-Nissen F."/>
            <person name="Schobel S."/>
            <person name="Town C.D."/>
        </authorList>
    </citation>
    <scope>GENOME REANNOTATION</scope>
    <source>
        <strain>cv. Columbia</strain>
    </source>
</reference>
<reference key="3">
    <citation type="journal article" date="2003" name="Science">
        <title>Empirical analysis of transcriptional activity in the Arabidopsis genome.</title>
        <authorList>
            <person name="Yamada K."/>
            <person name="Lim J."/>
            <person name="Dale J.M."/>
            <person name="Chen H."/>
            <person name="Shinn P."/>
            <person name="Palm C.J."/>
            <person name="Southwick A.M."/>
            <person name="Wu H.C."/>
            <person name="Kim C.J."/>
            <person name="Nguyen M."/>
            <person name="Pham P.K."/>
            <person name="Cheuk R.F."/>
            <person name="Karlin-Newmann G."/>
            <person name="Liu S.X."/>
            <person name="Lam B."/>
            <person name="Sakano H."/>
            <person name="Wu T."/>
            <person name="Yu G."/>
            <person name="Miranda M."/>
            <person name="Quach H.L."/>
            <person name="Tripp M."/>
            <person name="Chang C.H."/>
            <person name="Lee J.M."/>
            <person name="Toriumi M.J."/>
            <person name="Chan M.M."/>
            <person name="Tang C.C."/>
            <person name="Onodera C.S."/>
            <person name="Deng J.M."/>
            <person name="Akiyama K."/>
            <person name="Ansari Y."/>
            <person name="Arakawa T."/>
            <person name="Banh J."/>
            <person name="Banno F."/>
            <person name="Bowser L."/>
            <person name="Brooks S.Y."/>
            <person name="Carninci P."/>
            <person name="Chao Q."/>
            <person name="Choy N."/>
            <person name="Enju A."/>
            <person name="Goldsmith A.D."/>
            <person name="Gurjal M."/>
            <person name="Hansen N.F."/>
            <person name="Hayashizaki Y."/>
            <person name="Johnson-Hopson C."/>
            <person name="Hsuan V.W."/>
            <person name="Iida K."/>
            <person name="Karnes M."/>
            <person name="Khan S."/>
            <person name="Koesema E."/>
            <person name="Ishida J."/>
            <person name="Jiang P.X."/>
            <person name="Jones T."/>
            <person name="Kawai J."/>
            <person name="Kamiya A."/>
            <person name="Meyers C."/>
            <person name="Nakajima M."/>
            <person name="Narusaka M."/>
            <person name="Seki M."/>
            <person name="Sakurai T."/>
            <person name="Satou M."/>
            <person name="Tamse R."/>
            <person name="Vaysberg M."/>
            <person name="Wallender E.K."/>
            <person name="Wong C."/>
            <person name="Yamamura Y."/>
            <person name="Yuan S."/>
            <person name="Shinozaki K."/>
            <person name="Davis R.W."/>
            <person name="Theologis A."/>
            <person name="Ecker J.R."/>
        </authorList>
    </citation>
    <scope>NUCLEOTIDE SEQUENCE [LARGE SCALE MRNA]</scope>
    <source>
        <strain>cv. Columbia</strain>
    </source>
</reference>
<keyword id="KW-0256">Endoplasmic reticulum</keyword>
<keyword id="KW-0275">Fatty acid biosynthesis</keyword>
<keyword id="KW-0276">Fatty acid metabolism</keyword>
<keyword id="KW-0408">Iron</keyword>
<keyword id="KW-0444">Lipid biosynthesis</keyword>
<keyword id="KW-0443">Lipid metabolism</keyword>
<keyword id="KW-0472">Membrane</keyword>
<keyword id="KW-0560">Oxidoreductase</keyword>
<keyword id="KW-1185">Reference proteome</keyword>
<keyword id="KW-0812">Transmembrane</keyword>
<keyword id="KW-1133">Transmembrane helix</keyword>